<reference key="1">
    <citation type="journal article" date="1998" name="Arch. Microbiol.">
        <title>Phylogenetic position of an obligately chemoautotrophic, marine hydrogen-oxidizing bacterium, Hydrogenovibrio marinus, on the basis of 16S rRNA gene sequences and two form I RuBisCO gene sequences.</title>
        <authorList>
            <person name="Nishihara H."/>
            <person name="Yaguchi T."/>
            <person name="Chung S.-Y."/>
            <person name="Suzuki K."/>
            <person name="Yanagi M."/>
            <person name="Yamasato K."/>
            <person name="Kodama T."/>
            <person name="Igarashi Y."/>
        </authorList>
    </citation>
    <scope>NUCLEOTIDE SEQUENCE [GENOMIC DNA]</scope>
    <scope>EXPRESSION IN E.COLI</scope>
    <source>
        <strain>DSM 11271 / JCM 7688 / MH-110</strain>
    </source>
</reference>
<reference key="2">
    <citation type="journal article" date="1998" name="J. Ferment. Bioeng.">
        <title>Different properties of gene products of three sets ribulose 1,5-bisphosphate carboxylase/oxygenase from a marine obligately autotrophic hydrogen-oxidizing bacterium, Hydrogenovibrio marinus strain MH-110.</title>
        <authorList>
            <person name="Hayashi N.R."/>
            <person name="Oguni A."/>
            <person name="Yaguchi T."/>
            <person name="Chung S.-Y."/>
            <person name="Nishihara H."/>
            <person name="Kodama T."/>
            <person name="Igarashi Y."/>
        </authorList>
    </citation>
    <scope>CHARACTERIZATION IN E.COLI</scope>
    <scope>FUNCTION</scope>
    <scope>BIOPHYSICOCHEMICAL PROPERTIES</scope>
    <scope>SUBUNIT</scope>
    <source>
        <strain>DSM 11271 / JCM 7688 / MH-110</strain>
    </source>
</reference>
<reference key="3">
    <citation type="journal article" date="2004" name="J. Bacteriol.">
        <title>CO2-responsive expression and gene organization of three ribulose-1,5-bisphosphate carboxylase/oxygenase enzymes and carboxysomes in Hydrogenovibrio marinus strain MH-110.</title>
        <authorList>
            <person name="Yoshizawa Y."/>
            <person name="Toyoda K."/>
            <person name="Arai H."/>
            <person name="Ishii M."/>
            <person name="Igarashi Y."/>
        </authorList>
    </citation>
    <scope>INDUCTION OF EXPRESSION BY CO(2) IN H.MARINUS</scope>
    <source>
        <strain>DSM 11271 / JCM 7688 / MH-110</strain>
    </source>
</reference>
<proteinExistence type="evidence at protein level"/>
<keyword id="KW-0113">Calvin cycle</keyword>
<keyword id="KW-0120">Carbon dioxide fixation</keyword>
<sequence length="117" mass="13306">MSQELDYPSSLSAPTSRKAETFSYLPKMTTDQIKAQVEYIISKGWNPAIEHSEPENAFSYYWYMWKLPMFGDTDANVVLAEVDACIKANPNNHVRLIGYDNYAQSQGANMLVKRGDM</sequence>
<protein>
    <recommendedName>
        <fullName evidence="1">Ribulose bisphosphate carboxylase small subunit 1</fullName>
        <shortName evidence="1">RuBisCO small subunit 1</shortName>
    </recommendedName>
</protein>
<organism>
    <name type="scientific">Hydrogenovibrio marinus</name>
    <dbReference type="NCBI Taxonomy" id="28885"/>
    <lineage>
        <taxon>Bacteria</taxon>
        <taxon>Pseudomonadati</taxon>
        <taxon>Pseudomonadota</taxon>
        <taxon>Gammaproteobacteria</taxon>
        <taxon>Thiotrichales</taxon>
        <taxon>Piscirickettsiaceae</taxon>
        <taxon>Hydrogenovibrio</taxon>
    </lineage>
</organism>
<name>RBS1_HYDMR</name>
<evidence type="ECO:0000255" key="1">
    <source>
        <dbReference type="HAMAP-Rule" id="MF_00859"/>
    </source>
</evidence>
<evidence type="ECO:0000269" key="2">
    <source>
    </source>
</evidence>
<evidence type="ECO:0000269" key="3">
    <source ref="2"/>
</evidence>
<evidence type="ECO:0000303" key="4">
    <source>
    </source>
</evidence>
<feature type="chain" id="PRO_0000198614" description="Ribulose bisphosphate carboxylase small subunit 1">
    <location>
        <begin position="1"/>
        <end position="117"/>
    </location>
</feature>
<dbReference type="EMBL" id="D43621">
    <property type="protein sequence ID" value="BAA07730.1"/>
    <property type="molecule type" value="Genomic_DNA"/>
</dbReference>
<dbReference type="SMR" id="Q59459"/>
<dbReference type="STRING" id="28885.EI16_08845"/>
<dbReference type="GO" id="GO:0016984">
    <property type="term" value="F:ribulose-bisphosphate carboxylase activity"/>
    <property type="evidence" value="ECO:0007669"/>
    <property type="project" value="UniProtKB-UniRule"/>
</dbReference>
<dbReference type="GO" id="GO:0019253">
    <property type="term" value="P:reductive pentose-phosphate cycle"/>
    <property type="evidence" value="ECO:0007669"/>
    <property type="project" value="UniProtKB-UniRule"/>
</dbReference>
<dbReference type="CDD" id="cd03527">
    <property type="entry name" value="RuBisCO_small"/>
    <property type="match status" value="1"/>
</dbReference>
<dbReference type="Gene3D" id="3.30.190.10">
    <property type="entry name" value="Ribulose bisphosphate carboxylase, small subunit"/>
    <property type="match status" value="1"/>
</dbReference>
<dbReference type="HAMAP" id="MF_00859">
    <property type="entry name" value="RuBisCO_S_bact"/>
    <property type="match status" value="1"/>
</dbReference>
<dbReference type="InterPro" id="IPR024681">
    <property type="entry name" value="RuBisCO_ssu"/>
</dbReference>
<dbReference type="InterPro" id="IPR000894">
    <property type="entry name" value="RuBisCO_ssu_dom"/>
</dbReference>
<dbReference type="InterPro" id="IPR036385">
    <property type="entry name" value="RuBisCO_ssu_sf"/>
</dbReference>
<dbReference type="PANTHER" id="PTHR31262">
    <property type="entry name" value="RIBULOSE BISPHOSPHATE CARBOXYLASE SMALL CHAIN 1, CHLOROPLASTIC"/>
    <property type="match status" value="1"/>
</dbReference>
<dbReference type="Pfam" id="PF00101">
    <property type="entry name" value="RuBisCO_small"/>
    <property type="match status" value="1"/>
</dbReference>
<dbReference type="SMART" id="SM00961">
    <property type="entry name" value="RuBisCO_small"/>
    <property type="match status" value="1"/>
</dbReference>
<dbReference type="SUPFAM" id="SSF55239">
    <property type="entry name" value="RuBisCO, small subunit"/>
    <property type="match status" value="1"/>
</dbReference>
<gene>
    <name evidence="1" type="primary">cbbS1</name>
    <name evidence="4" type="synonym">cbbS-1</name>
</gene>
<comment type="function">
    <text evidence="1 3">RuBisCO catalyzes two reactions: the carboxylation of D-ribulose 1,5-bisphosphate, the primary event in carbon dioxide fixation, as well as the oxidative fragmentation of the pentose substrate. Both reactions occur simultaneously and in competition at the same active site. Although the small subunit is not catalytic it is essential for maximal activity.</text>
</comment>
<comment type="biophysicochemical properties">
    <kinetics>
        <Vmax evidence="3">1.2 umol/min/mg enzyme with CO(2) as substrate, expressed in E.coli</Vmax>
        <text evidence="3">The CO(2)/O(2) specificity factor (tau) is 26.6.</text>
    </kinetics>
</comment>
<comment type="subunit">
    <text evidence="1 3">Heterohexadecamer of 8 large and 8 small subunits.</text>
</comment>
<comment type="induction">
    <text evidence="2">Both mRNA and protein accumulate at 2% and 0.03% CO(2), but not at 15% or 0.15% CO(2) (at protein level).</text>
</comment>
<comment type="miscellaneous">
    <text evidence="1">The basic functional RuBisCO is composed of a large chain homodimer in a 'head-to-tail' conformation. In form I RuBisCO this homodimer is arranged in a barrel-like tetramer with the small subunits forming a tetrameric 'cap' on each end of the 'barrel'.</text>
</comment>
<comment type="similarity">
    <text evidence="1">Belongs to the RuBisCO small chain family.</text>
</comment>
<accession>Q59459</accession>